<proteinExistence type="inferred from homology"/>
<accession>A7ZMF8</accession>
<feature type="chain" id="PRO_1000058629" description="3-dehydroquinate dehydratase">
    <location>
        <begin position="1"/>
        <end position="252"/>
    </location>
</feature>
<feature type="active site" description="Proton donor/acceptor" evidence="1">
    <location>
        <position position="143"/>
    </location>
</feature>
<feature type="active site" description="Schiff-base intermediate with substrate" evidence="1">
    <location>
        <position position="170"/>
    </location>
</feature>
<feature type="binding site" evidence="1">
    <location>
        <position position="21"/>
    </location>
    <ligand>
        <name>3-dehydroquinate</name>
        <dbReference type="ChEBI" id="CHEBI:32364"/>
    </ligand>
</feature>
<feature type="binding site" evidence="1">
    <location>
        <begin position="46"/>
        <end position="48"/>
    </location>
    <ligand>
        <name>3-dehydroquinate</name>
        <dbReference type="ChEBI" id="CHEBI:32364"/>
    </ligand>
</feature>
<feature type="binding site" evidence="1">
    <location>
        <position position="82"/>
    </location>
    <ligand>
        <name>3-dehydroquinate</name>
        <dbReference type="ChEBI" id="CHEBI:32364"/>
    </ligand>
</feature>
<feature type="binding site" evidence="1">
    <location>
        <position position="213"/>
    </location>
    <ligand>
        <name>3-dehydroquinate</name>
        <dbReference type="ChEBI" id="CHEBI:32364"/>
    </ligand>
</feature>
<feature type="binding site" evidence="1">
    <location>
        <position position="232"/>
    </location>
    <ligand>
        <name>3-dehydroquinate</name>
        <dbReference type="ChEBI" id="CHEBI:32364"/>
    </ligand>
</feature>
<feature type="binding site" evidence="1">
    <location>
        <position position="236"/>
    </location>
    <ligand>
        <name>3-dehydroquinate</name>
        <dbReference type="ChEBI" id="CHEBI:32364"/>
    </ligand>
</feature>
<organism>
    <name type="scientific">Escherichia coli O139:H28 (strain E24377A / ETEC)</name>
    <dbReference type="NCBI Taxonomy" id="331111"/>
    <lineage>
        <taxon>Bacteria</taxon>
        <taxon>Pseudomonadati</taxon>
        <taxon>Pseudomonadota</taxon>
        <taxon>Gammaproteobacteria</taxon>
        <taxon>Enterobacterales</taxon>
        <taxon>Enterobacteriaceae</taxon>
        <taxon>Escherichia</taxon>
    </lineage>
</organism>
<gene>
    <name evidence="1" type="primary">aroD</name>
    <name type="ordered locus">EcE24377A_1909</name>
</gene>
<evidence type="ECO:0000255" key="1">
    <source>
        <dbReference type="HAMAP-Rule" id="MF_00214"/>
    </source>
</evidence>
<dbReference type="EC" id="4.2.1.10" evidence="1"/>
<dbReference type="EMBL" id="CP000800">
    <property type="protein sequence ID" value="ABV20533.1"/>
    <property type="molecule type" value="Genomic_DNA"/>
</dbReference>
<dbReference type="RefSeq" id="WP_000860186.1">
    <property type="nucleotide sequence ID" value="NC_009801.1"/>
</dbReference>
<dbReference type="SMR" id="A7ZMF8"/>
<dbReference type="KEGG" id="ecw:EcE24377A_1909"/>
<dbReference type="HOGENOM" id="CLU_064444_0_0_6"/>
<dbReference type="UniPathway" id="UPA00053">
    <property type="reaction ID" value="UER00086"/>
</dbReference>
<dbReference type="Proteomes" id="UP000001122">
    <property type="component" value="Chromosome"/>
</dbReference>
<dbReference type="GO" id="GO:0003855">
    <property type="term" value="F:3-dehydroquinate dehydratase activity"/>
    <property type="evidence" value="ECO:0007669"/>
    <property type="project" value="UniProtKB-UniRule"/>
</dbReference>
<dbReference type="GO" id="GO:0046279">
    <property type="term" value="P:3,4-dihydroxybenzoate biosynthetic process"/>
    <property type="evidence" value="ECO:0007669"/>
    <property type="project" value="TreeGrafter"/>
</dbReference>
<dbReference type="GO" id="GO:0008652">
    <property type="term" value="P:amino acid biosynthetic process"/>
    <property type="evidence" value="ECO:0007669"/>
    <property type="project" value="UniProtKB-KW"/>
</dbReference>
<dbReference type="GO" id="GO:0009073">
    <property type="term" value="P:aromatic amino acid family biosynthetic process"/>
    <property type="evidence" value="ECO:0007669"/>
    <property type="project" value="UniProtKB-KW"/>
</dbReference>
<dbReference type="GO" id="GO:0009423">
    <property type="term" value="P:chorismate biosynthetic process"/>
    <property type="evidence" value="ECO:0007669"/>
    <property type="project" value="UniProtKB-UniRule"/>
</dbReference>
<dbReference type="CDD" id="cd00502">
    <property type="entry name" value="DHQase_I"/>
    <property type="match status" value="1"/>
</dbReference>
<dbReference type="FunFam" id="3.20.20.70:FF:000047">
    <property type="entry name" value="3-dehydroquinate dehydratase"/>
    <property type="match status" value="1"/>
</dbReference>
<dbReference type="Gene3D" id="3.20.20.70">
    <property type="entry name" value="Aldolase class I"/>
    <property type="match status" value="1"/>
</dbReference>
<dbReference type="HAMAP" id="MF_00214">
    <property type="entry name" value="AroD"/>
    <property type="match status" value="1"/>
</dbReference>
<dbReference type="InterPro" id="IPR018508">
    <property type="entry name" value="3-dehydroquinate_DH_AS"/>
</dbReference>
<dbReference type="InterPro" id="IPR013785">
    <property type="entry name" value="Aldolase_TIM"/>
</dbReference>
<dbReference type="InterPro" id="IPR001381">
    <property type="entry name" value="DHquinase_I"/>
</dbReference>
<dbReference type="InterPro" id="IPR050146">
    <property type="entry name" value="Type-I_3-dehydroquinase"/>
</dbReference>
<dbReference type="NCBIfam" id="TIGR01093">
    <property type="entry name" value="aroD"/>
    <property type="match status" value="1"/>
</dbReference>
<dbReference type="PANTHER" id="PTHR43699">
    <property type="entry name" value="3-DEHYDROQUINATE DEHYDRATASE"/>
    <property type="match status" value="1"/>
</dbReference>
<dbReference type="PANTHER" id="PTHR43699:SF1">
    <property type="entry name" value="3-DEHYDROQUINATE DEHYDRATASE"/>
    <property type="match status" value="1"/>
</dbReference>
<dbReference type="Pfam" id="PF01487">
    <property type="entry name" value="DHquinase_I"/>
    <property type="match status" value="1"/>
</dbReference>
<dbReference type="SUPFAM" id="SSF51569">
    <property type="entry name" value="Aldolase"/>
    <property type="match status" value="1"/>
</dbReference>
<dbReference type="PROSITE" id="PS01028">
    <property type="entry name" value="DEHYDROQUINASE_I"/>
    <property type="match status" value="1"/>
</dbReference>
<protein>
    <recommendedName>
        <fullName evidence="1">3-dehydroquinate dehydratase</fullName>
        <shortName evidence="1">3-dehydroquinase</shortName>
        <ecNumber evidence="1">4.2.1.10</ecNumber>
    </recommendedName>
    <alternativeName>
        <fullName evidence="1">Type I DHQase</fullName>
    </alternativeName>
    <alternativeName>
        <fullName evidence="1">Type I dehydroquinase</fullName>
        <shortName evidence="1">DHQ1</shortName>
    </alternativeName>
</protein>
<keyword id="KW-0028">Amino-acid biosynthesis</keyword>
<keyword id="KW-0057">Aromatic amino acid biosynthesis</keyword>
<keyword id="KW-0456">Lyase</keyword>
<keyword id="KW-1185">Reference proteome</keyword>
<keyword id="KW-0704">Schiff base</keyword>
<comment type="function">
    <text evidence="1">Involved in the third step of the chorismate pathway, which leads to the biosynthesis of aromatic amino acids. Catalyzes the cis-dehydration of 3-dehydroquinate (DHQ) and introduces the first double bond of the aromatic ring to yield 3-dehydroshikimate.</text>
</comment>
<comment type="catalytic activity">
    <reaction evidence="1">
        <text>3-dehydroquinate = 3-dehydroshikimate + H2O</text>
        <dbReference type="Rhea" id="RHEA:21096"/>
        <dbReference type="ChEBI" id="CHEBI:15377"/>
        <dbReference type="ChEBI" id="CHEBI:16630"/>
        <dbReference type="ChEBI" id="CHEBI:32364"/>
        <dbReference type="EC" id="4.2.1.10"/>
    </reaction>
</comment>
<comment type="pathway">
    <text evidence="1">Metabolic intermediate biosynthesis; chorismate biosynthesis; chorismate from D-erythrose 4-phosphate and phosphoenolpyruvate: step 3/7.</text>
</comment>
<comment type="subunit">
    <text evidence="1">Homodimer.</text>
</comment>
<comment type="similarity">
    <text evidence="1">Belongs to the type-I 3-dehydroquinase family.</text>
</comment>
<reference key="1">
    <citation type="journal article" date="2008" name="J. Bacteriol.">
        <title>The pangenome structure of Escherichia coli: comparative genomic analysis of E. coli commensal and pathogenic isolates.</title>
        <authorList>
            <person name="Rasko D.A."/>
            <person name="Rosovitz M.J."/>
            <person name="Myers G.S.A."/>
            <person name="Mongodin E.F."/>
            <person name="Fricke W.F."/>
            <person name="Gajer P."/>
            <person name="Crabtree J."/>
            <person name="Sebaihia M."/>
            <person name="Thomson N.R."/>
            <person name="Chaudhuri R."/>
            <person name="Henderson I.R."/>
            <person name="Sperandio V."/>
            <person name="Ravel J."/>
        </authorList>
    </citation>
    <scope>NUCLEOTIDE SEQUENCE [LARGE SCALE GENOMIC DNA]</scope>
    <source>
        <strain>E24377A / ETEC</strain>
    </source>
</reference>
<sequence length="252" mass="27566">MKTVTVKDLVIGTGAPKIIVSLMAKDIARVKSEALAYREADFDILEWRVDHYADLSNVESVMAAAKILRETMPEKPLLFTFRSAKEGGEQAISTEAYIALNRAAIDSGLVDMIDLELFTGDDQVKETVAYAHAHDVKVVMSNHDFHKTPEAEEIIARLRKMQSFDADIPKIALMPQSTSDVLTLLTATLEMQEQYADRPIITMSMAKTGVISRLAGEVFGSAATFGAVKKASAPGQISVNDLRTVLTILHQA</sequence>
<name>AROD_ECO24</name>